<sequence>MQLNPSEISDLIKTRIEGLKAGADAKNTGTVISVTDGICRIHGLSGVMQGEMLEFPGNTFGLALNLERDSVGAVVLGEYEHISEGDEVKCTGRILEVPVGPELLGRVVNALGQPIDGKGPINAKKTDVIEKVAPGVIARQSVSQPVQTGLKSIDAMVPIGRGQRELIIGDRQTGKTAVAVDAIINQKGKGIFCVYVAIGQKASTIANVVRKLEEHGALEYTIVVAAAASDSAAMQYLSAYAGCTMGEYFRDRGEDALIVYDDLTKQAWAYRQVSLLLRRPPGREAYPGDVFYLHSRLLERAARVNAEHIEKITNGEVKGKTGSLTALPVIETQAGDVSAFVPTNVISITDGQIFLETDLFNAGVRPAINAGISVSRVGGAAQTKVIKKLSGGIRTDLAQYRELAAFAQFASDLDEATRKQLERGRRVTELLKQPQYQPLQVWQLAASLYAANNGFLDNVDVKDILAFEKGLHDTLKTKYADLINRIEDTKDLSKDDEAALRAAIEDFKKSAAF</sequence>
<evidence type="ECO:0000255" key="1">
    <source>
        <dbReference type="HAMAP-Rule" id="MF_01346"/>
    </source>
</evidence>
<organism>
    <name type="scientific">Ralstonia pickettii (strain 12J)</name>
    <dbReference type="NCBI Taxonomy" id="402626"/>
    <lineage>
        <taxon>Bacteria</taxon>
        <taxon>Pseudomonadati</taxon>
        <taxon>Pseudomonadota</taxon>
        <taxon>Betaproteobacteria</taxon>
        <taxon>Burkholderiales</taxon>
        <taxon>Burkholderiaceae</taxon>
        <taxon>Ralstonia</taxon>
    </lineage>
</organism>
<reference key="1">
    <citation type="submission" date="2008-05" db="EMBL/GenBank/DDBJ databases">
        <title>Complete sequence of chromosome 1 of Ralstonia pickettii 12J.</title>
        <authorList>
            <person name="Lucas S."/>
            <person name="Copeland A."/>
            <person name="Lapidus A."/>
            <person name="Glavina del Rio T."/>
            <person name="Dalin E."/>
            <person name="Tice H."/>
            <person name="Bruce D."/>
            <person name="Goodwin L."/>
            <person name="Pitluck S."/>
            <person name="Meincke L."/>
            <person name="Brettin T."/>
            <person name="Detter J.C."/>
            <person name="Han C."/>
            <person name="Kuske C.R."/>
            <person name="Schmutz J."/>
            <person name="Larimer F."/>
            <person name="Land M."/>
            <person name="Hauser L."/>
            <person name="Kyrpides N."/>
            <person name="Mikhailova N."/>
            <person name="Marsh T."/>
            <person name="Richardson P."/>
        </authorList>
    </citation>
    <scope>NUCLEOTIDE SEQUENCE [LARGE SCALE GENOMIC DNA]</scope>
    <source>
        <strain>12J</strain>
    </source>
</reference>
<accession>B2UGV1</accession>
<feature type="chain" id="PRO_1000143425" description="ATP synthase subunit alpha">
    <location>
        <begin position="1"/>
        <end position="513"/>
    </location>
</feature>
<feature type="binding site" evidence="1">
    <location>
        <begin position="169"/>
        <end position="176"/>
    </location>
    <ligand>
        <name>ATP</name>
        <dbReference type="ChEBI" id="CHEBI:30616"/>
    </ligand>
</feature>
<feature type="site" description="Required for activity" evidence="1">
    <location>
        <position position="373"/>
    </location>
</feature>
<gene>
    <name evidence="1" type="primary">atpA</name>
    <name type="ordered locus">Rpic_3514</name>
</gene>
<comment type="function">
    <text evidence="1">Produces ATP from ADP in the presence of a proton gradient across the membrane. The alpha chain is a regulatory subunit.</text>
</comment>
<comment type="catalytic activity">
    <reaction evidence="1">
        <text>ATP + H2O + 4 H(+)(in) = ADP + phosphate + 5 H(+)(out)</text>
        <dbReference type="Rhea" id="RHEA:57720"/>
        <dbReference type="ChEBI" id="CHEBI:15377"/>
        <dbReference type="ChEBI" id="CHEBI:15378"/>
        <dbReference type="ChEBI" id="CHEBI:30616"/>
        <dbReference type="ChEBI" id="CHEBI:43474"/>
        <dbReference type="ChEBI" id="CHEBI:456216"/>
        <dbReference type="EC" id="7.1.2.2"/>
    </reaction>
</comment>
<comment type="subunit">
    <text evidence="1">F-type ATPases have 2 components, CF(1) - the catalytic core - and CF(0) - the membrane proton channel. CF(1) has five subunits: alpha(3), beta(3), gamma(1), delta(1), epsilon(1). CF(0) has three main subunits: a(1), b(2) and c(9-12). The alpha and beta chains form an alternating ring which encloses part of the gamma chain. CF(1) is attached to CF(0) by a central stalk formed by the gamma and epsilon chains, while a peripheral stalk is formed by the delta and b chains.</text>
</comment>
<comment type="subcellular location">
    <subcellularLocation>
        <location evidence="1">Cell inner membrane</location>
        <topology evidence="1">Peripheral membrane protein</topology>
    </subcellularLocation>
</comment>
<comment type="similarity">
    <text evidence="1">Belongs to the ATPase alpha/beta chains family.</text>
</comment>
<keyword id="KW-0066">ATP synthesis</keyword>
<keyword id="KW-0067">ATP-binding</keyword>
<keyword id="KW-0997">Cell inner membrane</keyword>
<keyword id="KW-1003">Cell membrane</keyword>
<keyword id="KW-0139">CF(1)</keyword>
<keyword id="KW-0375">Hydrogen ion transport</keyword>
<keyword id="KW-0406">Ion transport</keyword>
<keyword id="KW-0472">Membrane</keyword>
<keyword id="KW-0547">Nucleotide-binding</keyword>
<keyword id="KW-1278">Translocase</keyword>
<keyword id="KW-0813">Transport</keyword>
<name>ATPA_RALPJ</name>
<proteinExistence type="inferred from homology"/>
<protein>
    <recommendedName>
        <fullName evidence="1">ATP synthase subunit alpha</fullName>
        <ecNumber evidence="1">7.1.2.2</ecNumber>
    </recommendedName>
    <alternativeName>
        <fullName evidence="1">ATP synthase F1 sector subunit alpha</fullName>
    </alternativeName>
    <alternativeName>
        <fullName evidence="1">F-ATPase subunit alpha</fullName>
    </alternativeName>
</protein>
<dbReference type="EC" id="7.1.2.2" evidence="1"/>
<dbReference type="EMBL" id="CP001068">
    <property type="protein sequence ID" value="ACD28634.1"/>
    <property type="molecule type" value="Genomic_DNA"/>
</dbReference>
<dbReference type="SMR" id="B2UGV1"/>
<dbReference type="STRING" id="402626.Rpic_3514"/>
<dbReference type="KEGG" id="rpi:Rpic_3514"/>
<dbReference type="eggNOG" id="COG0056">
    <property type="taxonomic scope" value="Bacteria"/>
</dbReference>
<dbReference type="HOGENOM" id="CLU_010091_2_1_4"/>
<dbReference type="GO" id="GO:0005886">
    <property type="term" value="C:plasma membrane"/>
    <property type="evidence" value="ECO:0007669"/>
    <property type="project" value="UniProtKB-SubCell"/>
</dbReference>
<dbReference type="GO" id="GO:0045259">
    <property type="term" value="C:proton-transporting ATP synthase complex"/>
    <property type="evidence" value="ECO:0007669"/>
    <property type="project" value="UniProtKB-KW"/>
</dbReference>
<dbReference type="GO" id="GO:0043531">
    <property type="term" value="F:ADP binding"/>
    <property type="evidence" value="ECO:0007669"/>
    <property type="project" value="TreeGrafter"/>
</dbReference>
<dbReference type="GO" id="GO:0005524">
    <property type="term" value="F:ATP binding"/>
    <property type="evidence" value="ECO:0007669"/>
    <property type="project" value="UniProtKB-UniRule"/>
</dbReference>
<dbReference type="GO" id="GO:0046933">
    <property type="term" value="F:proton-transporting ATP synthase activity, rotational mechanism"/>
    <property type="evidence" value="ECO:0007669"/>
    <property type="project" value="UniProtKB-UniRule"/>
</dbReference>
<dbReference type="CDD" id="cd18113">
    <property type="entry name" value="ATP-synt_F1_alpha_C"/>
    <property type="match status" value="1"/>
</dbReference>
<dbReference type="CDD" id="cd18116">
    <property type="entry name" value="ATP-synt_F1_alpha_N"/>
    <property type="match status" value="1"/>
</dbReference>
<dbReference type="CDD" id="cd01132">
    <property type="entry name" value="F1-ATPase_alpha_CD"/>
    <property type="match status" value="1"/>
</dbReference>
<dbReference type="FunFam" id="1.20.150.20:FF:000001">
    <property type="entry name" value="ATP synthase subunit alpha"/>
    <property type="match status" value="1"/>
</dbReference>
<dbReference type="FunFam" id="2.40.30.20:FF:000001">
    <property type="entry name" value="ATP synthase subunit alpha"/>
    <property type="match status" value="1"/>
</dbReference>
<dbReference type="FunFam" id="3.40.50.300:FF:000002">
    <property type="entry name" value="ATP synthase subunit alpha"/>
    <property type="match status" value="1"/>
</dbReference>
<dbReference type="Gene3D" id="2.40.30.20">
    <property type="match status" value="1"/>
</dbReference>
<dbReference type="Gene3D" id="1.20.150.20">
    <property type="entry name" value="ATP synthase alpha/beta chain, C-terminal domain"/>
    <property type="match status" value="1"/>
</dbReference>
<dbReference type="Gene3D" id="3.40.50.300">
    <property type="entry name" value="P-loop containing nucleotide triphosphate hydrolases"/>
    <property type="match status" value="1"/>
</dbReference>
<dbReference type="HAMAP" id="MF_01346">
    <property type="entry name" value="ATP_synth_alpha_bact"/>
    <property type="match status" value="1"/>
</dbReference>
<dbReference type="InterPro" id="IPR023366">
    <property type="entry name" value="ATP_synth_asu-like_sf"/>
</dbReference>
<dbReference type="InterPro" id="IPR000793">
    <property type="entry name" value="ATP_synth_asu_C"/>
</dbReference>
<dbReference type="InterPro" id="IPR038376">
    <property type="entry name" value="ATP_synth_asu_C_sf"/>
</dbReference>
<dbReference type="InterPro" id="IPR033732">
    <property type="entry name" value="ATP_synth_F1_a_nt-bd_dom"/>
</dbReference>
<dbReference type="InterPro" id="IPR005294">
    <property type="entry name" value="ATP_synth_F1_asu"/>
</dbReference>
<dbReference type="InterPro" id="IPR020003">
    <property type="entry name" value="ATPase_a/bsu_AS"/>
</dbReference>
<dbReference type="InterPro" id="IPR004100">
    <property type="entry name" value="ATPase_F1/V1/A1_a/bsu_N"/>
</dbReference>
<dbReference type="InterPro" id="IPR036121">
    <property type="entry name" value="ATPase_F1/V1/A1_a/bsu_N_sf"/>
</dbReference>
<dbReference type="InterPro" id="IPR000194">
    <property type="entry name" value="ATPase_F1/V1/A1_a/bsu_nucl-bd"/>
</dbReference>
<dbReference type="InterPro" id="IPR027417">
    <property type="entry name" value="P-loop_NTPase"/>
</dbReference>
<dbReference type="NCBIfam" id="TIGR00962">
    <property type="entry name" value="atpA"/>
    <property type="match status" value="1"/>
</dbReference>
<dbReference type="NCBIfam" id="NF009884">
    <property type="entry name" value="PRK13343.1"/>
    <property type="match status" value="1"/>
</dbReference>
<dbReference type="PANTHER" id="PTHR48082">
    <property type="entry name" value="ATP SYNTHASE SUBUNIT ALPHA, MITOCHONDRIAL"/>
    <property type="match status" value="1"/>
</dbReference>
<dbReference type="PANTHER" id="PTHR48082:SF2">
    <property type="entry name" value="ATP SYNTHASE SUBUNIT ALPHA, MITOCHONDRIAL"/>
    <property type="match status" value="1"/>
</dbReference>
<dbReference type="Pfam" id="PF00006">
    <property type="entry name" value="ATP-synt_ab"/>
    <property type="match status" value="1"/>
</dbReference>
<dbReference type="Pfam" id="PF00306">
    <property type="entry name" value="ATP-synt_ab_C"/>
    <property type="match status" value="1"/>
</dbReference>
<dbReference type="Pfam" id="PF02874">
    <property type="entry name" value="ATP-synt_ab_N"/>
    <property type="match status" value="1"/>
</dbReference>
<dbReference type="PIRSF" id="PIRSF039088">
    <property type="entry name" value="F_ATPase_subunit_alpha"/>
    <property type="match status" value="1"/>
</dbReference>
<dbReference type="SUPFAM" id="SSF47917">
    <property type="entry name" value="C-terminal domain of alpha and beta subunits of F1 ATP synthase"/>
    <property type="match status" value="1"/>
</dbReference>
<dbReference type="SUPFAM" id="SSF50615">
    <property type="entry name" value="N-terminal domain of alpha and beta subunits of F1 ATP synthase"/>
    <property type="match status" value="1"/>
</dbReference>
<dbReference type="SUPFAM" id="SSF52540">
    <property type="entry name" value="P-loop containing nucleoside triphosphate hydrolases"/>
    <property type="match status" value="1"/>
</dbReference>
<dbReference type="PROSITE" id="PS00152">
    <property type="entry name" value="ATPASE_ALPHA_BETA"/>
    <property type="match status" value="1"/>
</dbReference>